<keyword id="KW-0067">ATP-binding</keyword>
<keyword id="KW-0547">Nucleotide-binding</keyword>
<keyword id="KW-1185">Reference proteome</keyword>
<sequence>MPLILLCGFPCSGKSSRSQELQEHLEQSGRKVHIIGDHVLGVDRNAVYADSREEKDLRGSLRAAVERKLNKEDVVILDSLNYIKGYRYELFCLIKHVQTPHCLIHCITSPEVSSTWNQHRDKNEQYNQEIFDSLVQRFEFPDSRNRWDSPLFSVHKDEKLPLEQICNAIFHRKAPPPNQSTQMQPLSSTNFLHELDKVTQEVVTAVLSAQKTSIPGDVIMVPGASEKVQLPRILSMSELRRLRQQFISYTKLHPNENISQLANMFVQYLNQSIHG</sequence>
<reference key="1">
    <citation type="submission" date="2005-07" db="EMBL/GenBank/DDBJ databases">
        <authorList>
            <consortium name="NIH - Xenopus Gene Collection (XGC) project"/>
        </authorList>
    </citation>
    <scope>NUCLEOTIDE SEQUENCE [LARGE SCALE MRNA]</scope>
</reference>
<gene>
    <name type="primary">kti12</name>
</gene>
<protein>
    <recommendedName>
        <fullName>Protein KTI12 homolog</fullName>
    </recommendedName>
</protein>
<name>KTI12_XENLA</name>
<organism>
    <name type="scientific">Xenopus laevis</name>
    <name type="common">African clawed frog</name>
    <dbReference type="NCBI Taxonomy" id="8355"/>
    <lineage>
        <taxon>Eukaryota</taxon>
        <taxon>Metazoa</taxon>
        <taxon>Chordata</taxon>
        <taxon>Craniata</taxon>
        <taxon>Vertebrata</taxon>
        <taxon>Euteleostomi</taxon>
        <taxon>Amphibia</taxon>
        <taxon>Batrachia</taxon>
        <taxon>Anura</taxon>
        <taxon>Pipoidea</taxon>
        <taxon>Pipidae</taxon>
        <taxon>Xenopodinae</taxon>
        <taxon>Xenopus</taxon>
        <taxon>Xenopus</taxon>
    </lineage>
</organism>
<evidence type="ECO:0000255" key="1"/>
<evidence type="ECO:0000305" key="2"/>
<accession>Q4KLF3</accession>
<dbReference type="EMBL" id="BC099247">
    <property type="protein sequence ID" value="AAH99247.1"/>
    <property type="molecule type" value="mRNA"/>
</dbReference>
<dbReference type="RefSeq" id="NP_001090073.1">
    <property type="nucleotide sequence ID" value="NM_001096604.1"/>
</dbReference>
<dbReference type="RefSeq" id="XP_018106763.1">
    <property type="nucleotide sequence ID" value="XM_018251274.1"/>
</dbReference>
<dbReference type="SMR" id="Q4KLF3"/>
<dbReference type="DNASU" id="735147"/>
<dbReference type="GeneID" id="735147"/>
<dbReference type="KEGG" id="xla:735147"/>
<dbReference type="AGR" id="Xenbase:XB-GENE-5813954"/>
<dbReference type="CTD" id="735147"/>
<dbReference type="Xenbase" id="XB-GENE-5813954">
    <property type="gene designation" value="kti12.L"/>
</dbReference>
<dbReference type="OMA" id="THSRWDK"/>
<dbReference type="OrthoDB" id="9972657at2759"/>
<dbReference type="Proteomes" id="UP000186698">
    <property type="component" value="Chromosome 3L"/>
</dbReference>
<dbReference type="Bgee" id="735147">
    <property type="expression patterns" value="Expressed in egg cell and 19 other cell types or tissues"/>
</dbReference>
<dbReference type="GO" id="GO:0005524">
    <property type="term" value="F:ATP binding"/>
    <property type="evidence" value="ECO:0007669"/>
    <property type="project" value="UniProtKB-KW"/>
</dbReference>
<dbReference type="GO" id="GO:0002098">
    <property type="term" value="P:tRNA wobble uridine modification"/>
    <property type="evidence" value="ECO:0000318"/>
    <property type="project" value="GO_Central"/>
</dbReference>
<dbReference type="FunFam" id="3.40.50.300:FF:000827">
    <property type="entry name" value="KTI12 chromatin-associated homolog"/>
    <property type="match status" value="1"/>
</dbReference>
<dbReference type="Gene3D" id="3.40.50.300">
    <property type="entry name" value="P-loop containing nucleotide triphosphate hydrolases"/>
    <property type="match status" value="1"/>
</dbReference>
<dbReference type="InterPro" id="IPR013641">
    <property type="entry name" value="KTI12/PSTK"/>
</dbReference>
<dbReference type="InterPro" id="IPR027417">
    <property type="entry name" value="P-loop_NTPase"/>
</dbReference>
<dbReference type="PANTHER" id="PTHR12435">
    <property type="match status" value="1"/>
</dbReference>
<dbReference type="Pfam" id="PF08433">
    <property type="entry name" value="KTI12"/>
    <property type="match status" value="1"/>
</dbReference>
<dbReference type="SUPFAM" id="SSF52540">
    <property type="entry name" value="P-loop containing nucleoside triphosphate hydrolases"/>
    <property type="match status" value="1"/>
</dbReference>
<proteinExistence type="evidence at transcript level"/>
<feature type="chain" id="PRO_0000285690" description="Protein KTI12 homolog">
    <location>
        <begin position="1"/>
        <end position="275"/>
    </location>
</feature>
<feature type="binding site" evidence="1">
    <location>
        <begin position="8"/>
        <end position="15"/>
    </location>
    <ligand>
        <name>ATP</name>
        <dbReference type="ChEBI" id="CHEBI:30616"/>
    </ligand>
</feature>
<comment type="similarity">
    <text evidence="2">Belongs to the KTI12 family.</text>
</comment>